<comment type="function">
    <text evidence="1">Cell wall formation. Catalyzes the addition of glutamate to the nucleotide precursor UDP-N-acetylmuramoyl-L-alanine (UMA).</text>
</comment>
<comment type="catalytic activity">
    <reaction evidence="1">
        <text>UDP-N-acetyl-alpha-D-muramoyl-L-alanine + D-glutamate + ATP = UDP-N-acetyl-alpha-D-muramoyl-L-alanyl-D-glutamate + ADP + phosphate + H(+)</text>
        <dbReference type="Rhea" id="RHEA:16429"/>
        <dbReference type="ChEBI" id="CHEBI:15378"/>
        <dbReference type="ChEBI" id="CHEBI:29986"/>
        <dbReference type="ChEBI" id="CHEBI:30616"/>
        <dbReference type="ChEBI" id="CHEBI:43474"/>
        <dbReference type="ChEBI" id="CHEBI:83898"/>
        <dbReference type="ChEBI" id="CHEBI:83900"/>
        <dbReference type="ChEBI" id="CHEBI:456216"/>
        <dbReference type="EC" id="6.3.2.9"/>
    </reaction>
</comment>
<comment type="pathway">
    <text evidence="1">Cell wall biogenesis; peptidoglycan biosynthesis.</text>
</comment>
<comment type="subcellular location">
    <subcellularLocation>
        <location evidence="1">Cytoplasm</location>
    </subcellularLocation>
</comment>
<comment type="similarity">
    <text evidence="1">Belongs to the MurCDEF family.</text>
</comment>
<name>MURD_SYNAS</name>
<proteinExistence type="inferred from homology"/>
<organism>
    <name type="scientific">Syntrophus aciditrophicus (strain SB)</name>
    <dbReference type="NCBI Taxonomy" id="56780"/>
    <lineage>
        <taxon>Bacteria</taxon>
        <taxon>Pseudomonadati</taxon>
        <taxon>Thermodesulfobacteriota</taxon>
        <taxon>Syntrophia</taxon>
        <taxon>Syntrophales</taxon>
        <taxon>Syntrophaceae</taxon>
        <taxon>Syntrophus</taxon>
    </lineage>
</organism>
<gene>
    <name evidence="1" type="primary">murD</name>
    <name type="ordered locus">SYNAS_06790</name>
    <name type="ORF">SYN_01744</name>
</gene>
<protein>
    <recommendedName>
        <fullName evidence="1">UDP-N-acetylmuramoylalanine--D-glutamate ligase</fullName>
        <ecNumber evidence="1">6.3.2.9</ecNumber>
    </recommendedName>
    <alternativeName>
        <fullName evidence="1">D-glutamic acid-adding enzyme</fullName>
    </alternativeName>
    <alternativeName>
        <fullName evidence="1">UDP-N-acetylmuramoyl-L-alanyl-D-glutamate synthetase</fullName>
    </alternativeName>
</protein>
<keyword id="KW-0067">ATP-binding</keyword>
<keyword id="KW-0131">Cell cycle</keyword>
<keyword id="KW-0132">Cell division</keyword>
<keyword id="KW-0133">Cell shape</keyword>
<keyword id="KW-0961">Cell wall biogenesis/degradation</keyword>
<keyword id="KW-0963">Cytoplasm</keyword>
<keyword id="KW-0436">Ligase</keyword>
<keyword id="KW-0547">Nucleotide-binding</keyword>
<keyword id="KW-0573">Peptidoglycan synthesis</keyword>
<keyword id="KW-1185">Reference proteome</keyword>
<dbReference type="EC" id="6.3.2.9" evidence="1"/>
<dbReference type="EMBL" id="CP000252">
    <property type="protein sequence ID" value="ABC76558.1"/>
    <property type="molecule type" value="Genomic_DNA"/>
</dbReference>
<dbReference type="SMR" id="Q2LR50"/>
<dbReference type="FunCoup" id="Q2LR50">
    <property type="interactions" value="474"/>
</dbReference>
<dbReference type="STRING" id="56780.SYN_01744"/>
<dbReference type="KEGG" id="sat:SYN_01744"/>
<dbReference type="eggNOG" id="COG0771">
    <property type="taxonomic scope" value="Bacteria"/>
</dbReference>
<dbReference type="HOGENOM" id="CLU_032540_0_0_7"/>
<dbReference type="InParanoid" id="Q2LR50"/>
<dbReference type="UniPathway" id="UPA00219"/>
<dbReference type="Proteomes" id="UP000001933">
    <property type="component" value="Chromosome"/>
</dbReference>
<dbReference type="GO" id="GO:0005737">
    <property type="term" value="C:cytoplasm"/>
    <property type="evidence" value="ECO:0007669"/>
    <property type="project" value="UniProtKB-SubCell"/>
</dbReference>
<dbReference type="GO" id="GO:0005524">
    <property type="term" value="F:ATP binding"/>
    <property type="evidence" value="ECO:0007669"/>
    <property type="project" value="UniProtKB-UniRule"/>
</dbReference>
<dbReference type="GO" id="GO:0008764">
    <property type="term" value="F:UDP-N-acetylmuramoylalanine-D-glutamate ligase activity"/>
    <property type="evidence" value="ECO:0007669"/>
    <property type="project" value="UniProtKB-UniRule"/>
</dbReference>
<dbReference type="GO" id="GO:0051301">
    <property type="term" value="P:cell division"/>
    <property type="evidence" value="ECO:0007669"/>
    <property type="project" value="UniProtKB-KW"/>
</dbReference>
<dbReference type="GO" id="GO:0071555">
    <property type="term" value="P:cell wall organization"/>
    <property type="evidence" value="ECO:0007669"/>
    <property type="project" value="UniProtKB-KW"/>
</dbReference>
<dbReference type="GO" id="GO:0009252">
    <property type="term" value="P:peptidoglycan biosynthetic process"/>
    <property type="evidence" value="ECO:0007669"/>
    <property type="project" value="UniProtKB-UniRule"/>
</dbReference>
<dbReference type="GO" id="GO:0008360">
    <property type="term" value="P:regulation of cell shape"/>
    <property type="evidence" value="ECO:0007669"/>
    <property type="project" value="UniProtKB-KW"/>
</dbReference>
<dbReference type="Gene3D" id="3.90.190.20">
    <property type="entry name" value="Mur ligase, C-terminal domain"/>
    <property type="match status" value="1"/>
</dbReference>
<dbReference type="Gene3D" id="3.40.1190.10">
    <property type="entry name" value="Mur-like, catalytic domain"/>
    <property type="match status" value="1"/>
</dbReference>
<dbReference type="Gene3D" id="3.40.50.720">
    <property type="entry name" value="NAD(P)-binding Rossmann-like Domain"/>
    <property type="match status" value="1"/>
</dbReference>
<dbReference type="HAMAP" id="MF_00639">
    <property type="entry name" value="MurD"/>
    <property type="match status" value="1"/>
</dbReference>
<dbReference type="InterPro" id="IPR036565">
    <property type="entry name" value="Mur-like_cat_sf"/>
</dbReference>
<dbReference type="InterPro" id="IPR004101">
    <property type="entry name" value="Mur_ligase_C"/>
</dbReference>
<dbReference type="InterPro" id="IPR036615">
    <property type="entry name" value="Mur_ligase_C_dom_sf"/>
</dbReference>
<dbReference type="InterPro" id="IPR013221">
    <property type="entry name" value="Mur_ligase_cen"/>
</dbReference>
<dbReference type="InterPro" id="IPR005762">
    <property type="entry name" value="MurD"/>
</dbReference>
<dbReference type="NCBIfam" id="TIGR01087">
    <property type="entry name" value="murD"/>
    <property type="match status" value="1"/>
</dbReference>
<dbReference type="PANTHER" id="PTHR43692">
    <property type="entry name" value="UDP-N-ACETYLMURAMOYLALANINE--D-GLUTAMATE LIGASE"/>
    <property type="match status" value="1"/>
</dbReference>
<dbReference type="PANTHER" id="PTHR43692:SF1">
    <property type="entry name" value="UDP-N-ACETYLMURAMOYLALANINE--D-GLUTAMATE LIGASE"/>
    <property type="match status" value="1"/>
</dbReference>
<dbReference type="Pfam" id="PF02875">
    <property type="entry name" value="Mur_ligase_C"/>
    <property type="match status" value="1"/>
</dbReference>
<dbReference type="Pfam" id="PF08245">
    <property type="entry name" value="Mur_ligase_M"/>
    <property type="match status" value="1"/>
</dbReference>
<dbReference type="Pfam" id="PF21799">
    <property type="entry name" value="MurD-like_N"/>
    <property type="match status" value="1"/>
</dbReference>
<dbReference type="SUPFAM" id="SSF51984">
    <property type="entry name" value="MurCD N-terminal domain"/>
    <property type="match status" value="1"/>
</dbReference>
<dbReference type="SUPFAM" id="SSF53623">
    <property type="entry name" value="MurD-like peptide ligases, catalytic domain"/>
    <property type="match status" value="1"/>
</dbReference>
<dbReference type="SUPFAM" id="SSF53244">
    <property type="entry name" value="MurD-like peptide ligases, peptide-binding domain"/>
    <property type="match status" value="1"/>
</dbReference>
<sequence>MFFMDISGQRMLVIGWGKTGVASARFLISRGARVVVADEKNLSLENDVLSKLGEDHGQSVELADYGISALAQVDAVVPSPGVPPFHPVLKEAVKRCIPVISELELACRYLQTPMIAITGTNGKTTTTSLIGEILSGSGRKVFVGGNIGTPLVEYVTGPQTADCAVVEISSFQLQWVDQFHAFVSILLNTTCDHVNYHGSFEAYRAVKERIFNNQGKQDVAILNADEPDSAVLAESLSSPVFFFSTTKMVERGLYQEKDRLICLDGEGKQEFYPLSMIRLPGAHNVENVMAAILASRACGCSPENVINAISGFSGIAHRIEFTREIGGVKFYDDSKGTNVGAVKRAIETFSDPIILLMGGRDKDGDFETLSALLQDRVKALVIFGEARERIQERIGGIVPTVLTPSLKEAIAAARRQACAGDVVLLSPGCASFDEFADYKARGRFFKEEVRAFA</sequence>
<accession>Q2LR50</accession>
<feature type="chain" id="PRO_0000257257" description="UDP-N-acetylmuramoylalanine--D-glutamate ligase">
    <location>
        <begin position="1"/>
        <end position="453"/>
    </location>
</feature>
<feature type="binding site" evidence="1">
    <location>
        <begin position="119"/>
        <end position="125"/>
    </location>
    <ligand>
        <name>ATP</name>
        <dbReference type="ChEBI" id="CHEBI:30616"/>
    </ligand>
</feature>
<evidence type="ECO:0000255" key="1">
    <source>
        <dbReference type="HAMAP-Rule" id="MF_00639"/>
    </source>
</evidence>
<reference key="1">
    <citation type="journal article" date="2007" name="Proc. Natl. Acad. Sci. U.S.A.">
        <title>The genome of Syntrophus aciditrophicus: life at the thermodynamic limit of microbial growth.</title>
        <authorList>
            <person name="McInerney M.J."/>
            <person name="Rohlin L."/>
            <person name="Mouttaki H."/>
            <person name="Kim U."/>
            <person name="Krupp R.S."/>
            <person name="Rios-Hernandez L."/>
            <person name="Sieber J."/>
            <person name="Struchtemeyer C.G."/>
            <person name="Bhattacharyya A."/>
            <person name="Campbell J.W."/>
            <person name="Gunsalus R.P."/>
        </authorList>
    </citation>
    <scope>NUCLEOTIDE SEQUENCE [LARGE SCALE GENOMIC DNA]</scope>
    <source>
        <strain>SB</strain>
    </source>
</reference>